<organism>
    <name type="scientific">Aromatoleum aromaticum (strain DSM 19018 / LMG 30748 / EbN1)</name>
    <name type="common">Azoarcus sp. (strain EbN1)</name>
    <dbReference type="NCBI Taxonomy" id="76114"/>
    <lineage>
        <taxon>Bacteria</taxon>
        <taxon>Pseudomonadati</taxon>
        <taxon>Pseudomonadota</taxon>
        <taxon>Betaproteobacteria</taxon>
        <taxon>Rhodocyclales</taxon>
        <taxon>Rhodocyclaceae</taxon>
        <taxon>Aromatoleum</taxon>
    </lineage>
</organism>
<evidence type="ECO:0000255" key="1">
    <source>
        <dbReference type="HAMAP-Rule" id="MF_00376"/>
    </source>
</evidence>
<name>COAE_AROAE</name>
<sequence>MNSHHFLVGLTGGIGSGKSAAADRLAELGAAVIDTDLIAHALTAPGGAAIEPIRAAFGDAVITVDGALDRKAMRDLAFSDPQARRQLEAIIHPAIRAESDRQIREARGPYAVLVVPLLIESNAYRDRYDRICVVDCPVDVQIARVMTRSHLPEDQVRAIIAVQSSREEKLAAADDVIDNSGDLASLYAQVDRLHARYLAAARATG</sequence>
<gene>
    <name evidence="1" type="primary">coaE</name>
    <name type="ordered locus">AZOSEA23250</name>
    <name type="ORF">ebA4105</name>
</gene>
<proteinExistence type="inferred from homology"/>
<reference key="1">
    <citation type="journal article" date="2005" name="Arch. Microbiol.">
        <title>The genome sequence of an anaerobic aromatic-degrading denitrifying bacterium, strain EbN1.</title>
        <authorList>
            <person name="Rabus R."/>
            <person name="Kube M."/>
            <person name="Heider J."/>
            <person name="Beck A."/>
            <person name="Heitmann K."/>
            <person name="Widdel F."/>
            <person name="Reinhardt R."/>
        </authorList>
    </citation>
    <scope>NUCLEOTIDE SEQUENCE [LARGE SCALE GENOMIC DNA]</scope>
    <source>
        <strain>DSM 19018 / LMG 30748 / EbN1</strain>
    </source>
</reference>
<comment type="function">
    <text evidence="1">Catalyzes the phosphorylation of the 3'-hydroxyl group of dephosphocoenzyme A to form coenzyme A.</text>
</comment>
<comment type="catalytic activity">
    <reaction evidence="1">
        <text>3'-dephospho-CoA + ATP = ADP + CoA + H(+)</text>
        <dbReference type="Rhea" id="RHEA:18245"/>
        <dbReference type="ChEBI" id="CHEBI:15378"/>
        <dbReference type="ChEBI" id="CHEBI:30616"/>
        <dbReference type="ChEBI" id="CHEBI:57287"/>
        <dbReference type="ChEBI" id="CHEBI:57328"/>
        <dbReference type="ChEBI" id="CHEBI:456216"/>
        <dbReference type="EC" id="2.7.1.24"/>
    </reaction>
</comment>
<comment type="pathway">
    <text evidence="1">Cofactor biosynthesis; coenzyme A biosynthesis; CoA from (R)-pantothenate: step 5/5.</text>
</comment>
<comment type="subcellular location">
    <subcellularLocation>
        <location evidence="1">Cytoplasm</location>
    </subcellularLocation>
</comment>
<comment type="similarity">
    <text evidence="1">Belongs to the CoaE family.</text>
</comment>
<keyword id="KW-0067">ATP-binding</keyword>
<keyword id="KW-0173">Coenzyme A biosynthesis</keyword>
<keyword id="KW-0963">Cytoplasm</keyword>
<keyword id="KW-0418">Kinase</keyword>
<keyword id="KW-0547">Nucleotide-binding</keyword>
<keyword id="KW-1185">Reference proteome</keyword>
<keyword id="KW-0808">Transferase</keyword>
<accession>Q5P2L4</accession>
<dbReference type="EC" id="2.7.1.24" evidence="1"/>
<dbReference type="EMBL" id="CR555306">
    <property type="protein sequence ID" value="CAI08450.1"/>
    <property type="molecule type" value="Genomic_DNA"/>
</dbReference>
<dbReference type="RefSeq" id="WP_011238137.1">
    <property type="nucleotide sequence ID" value="NC_006513.1"/>
</dbReference>
<dbReference type="SMR" id="Q5P2L4"/>
<dbReference type="STRING" id="76114.ebA4105"/>
<dbReference type="KEGG" id="eba:ebA4105"/>
<dbReference type="eggNOG" id="COG0237">
    <property type="taxonomic scope" value="Bacteria"/>
</dbReference>
<dbReference type="HOGENOM" id="CLU_057180_1_2_4"/>
<dbReference type="OrthoDB" id="9812943at2"/>
<dbReference type="UniPathway" id="UPA00241">
    <property type="reaction ID" value="UER00356"/>
</dbReference>
<dbReference type="Proteomes" id="UP000006552">
    <property type="component" value="Chromosome"/>
</dbReference>
<dbReference type="GO" id="GO:0005737">
    <property type="term" value="C:cytoplasm"/>
    <property type="evidence" value="ECO:0007669"/>
    <property type="project" value="UniProtKB-SubCell"/>
</dbReference>
<dbReference type="GO" id="GO:0005524">
    <property type="term" value="F:ATP binding"/>
    <property type="evidence" value="ECO:0007669"/>
    <property type="project" value="UniProtKB-UniRule"/>
</dbReference>
<dbReference type="GO" id="GO:0004140">
    <property type="term" value="F:dephospho-CoA kinase activity"/>
    <property type="evidence" value="ECO:0007669"/>
    <property type="project" value="UniProtKB-UniRule"/>
</dbReference>
<dbReference type="GO" id="GO:0015937">
    <property type="term" value="P:coenzyme A biosynthetic process"/>
    <property type="evidence" value="ECO:0007669"/>
    <property type="project" value="UniProtKB-UniRule"/>
</dbReference>
<dbReference type="CDD" id="cd02022">
    <property type="entry name" value="DPCK"/>
    <property type="match status" value="1"/>
</dbReference>
<dbReference type="Gene3D" id="3.40.50.300">
    <property type="entry name" value="P-loop containing nucleotide triphosphate hydrolases"/>
    <property type="match status" value="1"/>
</dbReference>
<dbReference type="HAMAP" id="MF_00376">
    <property type="entry name" value="Dephospho_CoA_kinase"/>
    <property type="match status" value="1"/>
</dbReference>
<dbReference type="InterPro" id="IPR001977">
    <property type="entry name" value="Depp_CoAkinase"/>
</dbReference>
<dbReference type="InterPro" id="IPR027417">
    <property type="entry name" value="P-loop_NTPase"/>
</dbReference>
<dbReference type="NCBIfam" id="TIGR00152">
    <property type="entry name" value="dephospho-CoA kinase"/>
    <property type="match status" value="1"/>
</dbReference>
<dbReference type="PANTHER" id="PTHR10695:SF46">
    <property type="entry name" value="BIFUNCTIONAL COENZYME A SYNTHASE-RELATED"/>
    <property type="match status" value="1"/>
</dbReference>
<dbReference type="PANTHER" id="PTHR10695">
    <property type="entry name" value="DEPHOSPHO-COA KINASE-RELATED"/>
    <property type="match status" value="1"/>
</dbReference>
<dbReference type="Pfam" id="PF01121">
    <property type="entry name" value="CoaE"/>
    <property type="match status" value="1"/>
</dbReference>
<dbReference type="SUPFAM" id="SSF52540">
    <property type="entry name" value="P-loop containing nucleoside triphosphate hydrolases"/>
    <property type="match status" value="1"/>
</dbReference>
<dbReference type="PROSITE" id="PS51219">
    <property type="entry name" value="DPCK"/>
    <property type="match status" value="1"/>
</dbReference>
<feature type="chain" id="PRO_0000243255" description="Dephospho-CoA kinase">
    <location>
        <begin position="1"/>
        <end position="205"/>
    </location>
</feature>
<feature type="domain" description="DPCK" evidence="1">
    <location>
        <begin position="7"/>
        <end position="204"/>
    </location>
</feature>
<feature type="binding site" evidence="1">
    <location>
        <begin position="15"/>
        <end position="20"/>
    </location>
    <ligand>
        <name>ATP</name>
        <dbReference type="ChEBI" id="CHEBI:30616"/>
    </ligand>
</feature>
<protein>
    <recommendedName>
        <fullName evidence="1">Dephospho-CoA kinase</fullName>
        <ecNumber evidence="1">2.7.1.24</ecNumber>
    </recommendedName>
    <alternativeName>
        <fullName evidence="1">Dephosphocoenzyme A kinase</fullName>
    </alternativeName>
</protein>